<reference key="1">
    <citation type="submission" date="1997-12" db="EMBL/GenBank/DDBJ databases">
        <authorList>
            <person name="Hwang C.-W."/>
            <person name="Lee D.-K."/>
            <person name="Kang S.-C."/>
        </authorList>
    </citation>
    <scope>NUCLEOTIDE SEQUENCE [GENOMIC DNA]</scope>
</reference>
<accession>O42767</accession>
<keyword id="KW-0328">Glycosyltransferase</keyword>
<keyword id="KW-0665">Pyrimidine biosynthesis</keyword>
<keyword id="KW-0808">Transferase</keyword>
<name>PYRE_METAN</name>
<protein>
    <recommendedName>
        <fullName>Orotate phosphoribosyltransferase</fullName>
        <shortName>OPRT</shortName>
        <shortName>OPRTase</shortName>
        <ecNumber>2.4.2.10</ecNumber>
    </recommendedName>
</protein>
<comment type="function">
    <text evidence="1">Catalyzes the transfer of a ribosyl phosphate group from 5-phosphoribose 1-diphosphate to orotate, leading to the formation of orotidine monophosphate (OMP).</text>
</comment>
<comment type="catalytic activity">
    <reaction>
        <text>orotidine 5'-phosphate + diphosphate = orotate + 5-phospho-alpha-D-ribose 1-diphosphate</text>
        <dbReference type="Rhea" id="RHEA:10380"/>
        <dbReference type="ChEBI" id="CHEBI:30839"/>
        <dbReference type="ChEBI" id="CHEBI:33019"/>
        <dbReference type="ChEBI" id="CHEBI:57538"/>
        <dbReference type="ChEBI" id="CHEBI:58017"/>
        <dbReference type="EC" id="2.4.2.10"/>
    </reaction>
</comment>
<comment type="pathway">
    <text>Pyrimidine metabolism; UMP biosynthesis via de novo pathway; UMP from orotate: step 1/2.</text>
</comment>
<comment type="subunit">
    <text evidence="1">Homodimer.</text>
</comment>
<comment type="similarity">
    <text evidence="2">Belongs to the purine/pyrimidine phosphoribosyltransferase family. PyrE subfamily.</text>
</comment>
<sequence>MSGQLASYKQEFLKAAIEGGVLKFGSFELKSKRISPYFFNAGEFHTAHLAGAISSAFAKTIIDAQQNAGLDFDIIFGPAYKGIPLCSAITIKLGEISPQNLDTVSYSFDRKEAKDHGEGGNIVGASLKGKKILIVDDVITAGTAKREAIDKIRKEGGIVAGIVVALDRKEKLPAADGDDSKPGPSAIGELRKEYGIPIFAILTLDDIIAGMKSFASDDDIKRTEEYRQKYKATD</sequence>
<feature type="chain" id="PRO_0000110798" description="Orotate phosphoribosyltransferase">
    <location>
        <begin position="1"/>
        <end position="234"/>
    </location>
</feature>
<feature type="binding site" description="in other chain" evidence="1">
    <location>
        <position position="30"/>
    </location>
    <ligand>
        <name>5-phospho-alpha-D-ribose 1-diphosphate</name>
        <dbReference type="ChEBI" id="CHEBI:58017"/>
        <note>ligand shared between dimeric partners</note>
    </ligand>
</feature>
<feature type="binding site" evidence="1">
    <location>
        <begin position="38"/>
        <end position="39"/>
    </location>
    <ligand>
        <name>orotate</name>
        <dbReference type="ChEBI" id="CHEBI:30839"/>
    </ligand>
</feature>
<feature type="binding site" description="in other chain" evidence="1">
    <location>
        <begin position="80"/>
        <end position="81"/>
    </location>
    <ligand>
        <name>5-phospho-alpha-D-ribose 1-diphosphate</name>
        <dbReference type="ChEBI" id="CHEBI:58017"/>
        <note>ligand shared between dimeric partners</note>
    </ligand>
</feature>
<feature type="binding site" evidence="1">
    <location>
        <position position="110"/>
    </location>
    <ligand>
        <name>5-phospho-alpha-D-ribose 1-diphosphate</name>
        <dbReference type="ChEBI" id="CHEBI:58017"/>
        <note>ligand shared between dimeric partners</note>
    </ligand>
</feature>
<feature type="binding site" description="in other chain" evidence="1">
    <location>
        <position position="111"/>
    </location>
    <ligand>
        <name>5-phospho-alpha-D-ribose 1-diphosphate</name>
        <dbReference type="ChEBI" id="CHEBI:58017"/>
        <note>ligand shared between dimeric partners</note>
    </ligand>
</feature>
<feature type="binding site" evidence="1">
    <location>
        <position position="114"/>
    </location>
    <ligand>
        <name>5-phospho-alpha-D-ribose 1-diphosphate</name>
        <dbReference type="ChEBI" id="CHEBI:58017"/>
        <note>ligand shared between dimeric partners</note>
    </ligand>
</feature>
<feature type="binding site" evidence="1">
    <location>
        <position position="116"/>
    </location>
    <ligand>
        <name>5-phospho-alpha-D-ribose 1-diphosphate</name>
        <dbReference type="ChEBI" id="CHEBI:58017"/>
        <note>ligand shared between dimeric partners</note>
    </ligand>
</feature>
<feature type="binding site" description="in other chain" evidence="1">
    <location>
        <begin position="136"/>
        <end position="144"/>
    </location>
    <ligand>
        <name>5-phospho-alpha-D-ribose 1-diphosphate</name>
        <dbReference type="ChEBI" id="CHEBI:58017"/>
        <note>ligand shared between dimeric partners</note>
    </ligand>
</feature>
<feature type="binding site" evidence="1">
    <location>
        <position position="140"/>
    </location>
    <ligand>
        <name>orotate</name>
        <dbReference type="ChEBI" id="CHEBI:30839"/>
    </ligand>
</feature>
<feature type="binding site" evidence="1">
    <location>
        <position position="168"/>
    </location>
    <ligand>
        <name>orotate</name>
        <dbReference type="ChEBI" id="CHEBI:30839"/>
    </ligand>
</feature>
<dbReference type="EC" id="2.4.2.10"/>
<dbReference type="EMBL" id="AF038545">
    <property type="protein sequence ID" value="AAC02431.1"/>
    <property type="molecule type" value="Genomic_DNA"/>
</dbReference>
<dbReference type="SMR" id="O42767"/>
<dbReference type="VEuPathDB" id="FungiDB:MAN_00536"/>
<dbReference type="UniPathway" id="UPA00070">
    <property type="reaction ID" value="UER00119"/>
</dbReference>
<dbReference type="GO" id="GO:0005737">
    <property type="term" value="C:cytoplasm"/>
    <property type="evidence" value="ECO:0007669"/>
    <property type="project" value="TreeGrafter"/>
</dbReference>
<dbReference type="GO" id="GO:0004588">
    <property type="term" value="F:orotate phosphoribosyltransferase activity"/>
    <property type="evidence" value="ECO:0007669"/>
    <property type="project" value="UniProtKB-EC"/>
</dbReference>
<dbReference type="GO" id="GO:0006207">
    <property type="term" value="P:'de novo' pyrimidine nucleobase biosynthetic process"/>
    <property type="evidence" value="ECO:0007669"/>
    <property type="project" value="TreeGrafter"/>
</dbReference>
<dbReference type="GO" id="GO:0044205">
    <property type="term" value="P:'de novo' UMP biosynthetic process"/>
    <property type="evidence" value="ECO:0007669"/>
    <property type="project" value="UniProtKB-UniPathway"/>
</dbReference>
<dbReference type="GO" id="GO:0046132">
    <property type="term" value="P:pyrimidine ribonucleoside biosynthetic process"/>
    <property type="evidence" value="ECO:0007669"/>
    <property type="project" value="TreeGrafter"/>
</dbReference>
<dbReference type="CDD" id="cd06223">
    <property type="entry name" value="PRTases_typeI"/>
    <property type="match status" value="1"/>
</dbReference>
<dbReference type="FunFam" id="3.40.50.2020:FF:000008">
    <property type="entry name" value="Orotate phosphoribosyltransferase"/>
    <property type="match status" value="1"/>
</dbReference>
<dbReference type="Gene3D" id="3.40.50.2020">
    <property type="match status" value="1"/>
</dbReference>
<dbReference type="HAMAP" id="MF_01208">
    <property type="entry name" value="PyrE"/>
    <property type="match status" value="1"/>
</dbReference>
<dbReference type="InterPro" id="IPR023031">
    <property type="entry name" value="OPRT"/>
</dbReference>
<dbReference type="InterPro" id="IPR004467">
    <property type="entry name" value="Or_phspho_trans_dom"/>
</dbReference>
<dbReference type="InterPro" id="IPR000836">
    <property type="entry name" value="PRibTrfase_dom"/>
</dbReference>
<dbReference type="InterPro" id="IPR029057">
    <property type="entry name" value="PRTase-like"/>
</dbReference>
<dbReference type="NCBIfam" id="TIGR00336">
    <property type="entry name" value="pyrE"/>
    <property type="match status" value="1"/>
</dbReference>
<dbReference type="PANTHER" id="PTHR46683">
    <property type="entry name" value="OROTATE PHOSPHORIBOSYLTRANSFERASE 1-RELATED"/>
    <property type="match status" value="1"/>
</dbReference>
<dbReference type="PANTHER" id="PTHR46683:SF1">
    <property type="entry name" value="OROTATE PHOSPHORIBOSYLTRANSFERASE 1-RELATED"/>
    <property type="match status" value="1"/>
</dbReference>
<dbReference type="Pfam" id="PF00156">
    <property type="entry name" value="Pribosyltran"/>
    <property type="match status" value="1"/>
</dbReference>
<dbReference type="SUPFAM" id="SSF53271">
    <property type="entry name" value="PRTase-like"/>
    <property type="match status" value="1"/>
</dbReference>
<dbReference type="PROSITE" id="PS00103">
    <property type="entry name" value="PUR_PYR_PR_TRANSFER"/>
    <property type="match status" value="1"/>
</dbReference>
<evidence type="ECO:0000250" key="1"/>
<evidence type="ECO:0000305" key="2"/>
<gene>
    <name type="primary">URA5</name>
</gene>
<organism>
    <name type="scientific">Metarhizium anisopliae</name>
    <name type="common">Entomophthora anisopliae</name>
    <dbReference type="NCBI Taxonomy" id="5530"/>
    <lineage>
        <taxon>Eukaryota</taxon>
        <taxon>Fungi</taxon>
        <taxon>Dikarya</taxon>
        <taxon>Ascomycota</taxon>
        <taxon>Pezizomycotina</taxon>
        <taxon>Sordariomycetes</taxon>
        <taxon>Hypocreomycetidae</taxon>
        <taxon>Hypocreales</taxon>
        <taxon>Clavicipitaceae</taxon>
        <taxon>Metarhizium</taxon>
    </lineage>
</organism>
<proteinExistence type="inferred from homology"/>